<reference key="1">
    <citation type="journal article" date="1985" name="Nucleic Acids Res.">
        <title>Cloning, sequencing and expression of subtilisin Carlsberg from Bacillus licheniformis.</title>
        <authorList>
            <person name="Jacobs M."/>
            <person name="Eliasson M."/>
            <person name="Uhlen M."/>
            <person name="Flock J.-I."/>
        </authorList>
    </citation>
    <scope>NUCLEOTIDE SEQUENCE [GENOMIC DNA]</scope>
    <source>
        <strain>NCIMB 6816 / CCM 2182 / NCDO 727 / NCTC 6816</strain>
    </source>
</reference>
<reference key="2">
    <citation type="journal article" date="2000" name="Can. J. Microbiol.">
        <title>Subtilisins of Bacillus spp. hydrolyze keratin and allow growth on feathers.</title>
        <authorList>
            <person name="Evans K.L."/>
            <person name="Crowder J."/>
            <person name="Miller E.S."/>
        </authorList>
    </citation>
    <scope>NUCLEOTIDE SEQUENCE [GENOMIC DNA] OF 1-374</scope>
    <scope>FUNCTION</scope>
    <scope>CATALYTIC ACTIVITY</scope>
    <scope>BIOPHYSICOCHEMICAL PROPERTIES</scope>
    <scope>SUBCELLULAR LOCATION</scope>
    <source>
        <strain>NCIMB 6816 / CCM 2182 / NCDO 727 / NCTC 6816</strain>
    </source>
</reference>
<reference key="3">
    <citation type="journal article" date="1968" name="J. Biol. Chem.">
        <title>Subtilisin Carlsberg. V. The complete sequence; comparison with subtilisin BPN'; evolutionary relationships.</title>
        <authorList>
            <person name="Smith E.L."/>
            <person name="Delange R.J."/>
            <person name="Evans W.H."/>
            <person name="Landon M."/>
            <person name="Markland F.S."/>
        </authorList>
    </citation>
    <scope>PROTEIN SEQUENCE OF 106-379</scope>
</reference>
<reference key="4">
    <citation type="journal article" date="1989" name="Curr. Microbiol.">
        <title>Subtilisin DY-Kinetic characterization and comparison with related proteinases.</title>
        <authorList>
            <person name="Peters K."/>
            <person name="Pauli D."/>
            <person name="Hache H."/>
            <person name="Boteva R.N."/>
            <person name="Genov N.C."/>
            <person name="Fittkau S."/>
        </authorList>
    </citation>
    <scope>FUNCTION</scope>
    <scope>CATALYTIC ACTIVITY</scope>
    <scope>BIOPHYSICOCHEMICAL PROPERTIES</scope>
</reference>
<reference evidence="13" key="5">
    <citation type="journal article" date="1993" name="Biochemistry">
        <title>Crystal structure of selenosubtilisin at 2.0-A resolution.</title>
        <authorList>
            <person name="Syed R."/>
            <person name="Wu Z.P."/>
            <person name="Hogle J.M."/>
            <person name="Hilvert D."/>
        </authorList>
    </citation>
    <scope>X-RAY CRYSTALLOGRAPHY (2.0 ANGSTROMS) OF 106-379 OF MUTANT SELENOCYSTEINE-325 IN COMPLEX WITH CALCIUM</scope>
    <scope>COFACTOR</scope>
</reference>
<reference evidence="11 12 14 15" key="6">
    <citation type="journal article" date="1998" name="Biochemistry">
        <title>Differences in binding modes of enantiomers of 1-acetamido boronic acid based protease inhibitors: crystal structures of gamma-chymotrypsin and subtilisin Carlsberg complexes.</title>
        <authorList>
            <person name="Stoll V.S."/>
            <person name="Eger B.T."/>
            <person name="Hynes R.C."/>
            <person name="Martichonok V."/>
            <person name="Jones J.B."/>
            <person name="Pai E.F."/>
        </authorList>
    </citation>
    <scope>X-RAY CRYSTALLOGRAPHY (2.1 ANGSTROMS) OF 106-379</scope>
    <scope>ACTIVITY REGULATION</scope>
</reference>
<proteinExistence type="evidence at protein level"/>
<gene>
    <name evidence="10" type="primary">subC</name>
    <name type="synonym">apr</name>
</gene>
<feature type="signal peptide" evidence="1">
    <location>
        <begin position="1"/>
        <end position="29"/>
    </location>
</feature>
<feature type="propeptide" id="PRO_0000027179" evidence="4">
    <location>
        <begin position="30"/>
        <end position="105"/>
    </location>
</feature>
<feature type="chain" id="PRO_0000027180" description="Subtilisin Carlsberg" evidence="4">
    <location>
        <begin position="106"/>
        <end position="379"/>
    </location>
</feature>
<feature type="domain" description="Inhibitor I9" evidence="1">
    <location>
        <begin position="44"/>
        <end position="102"/>
    </location>
</feature>
<feature type="domain" description="Peptidase S8" evidence="2">
    <location>
        <begin position="110"/>
        <end position="378"/>
    </location>
</feature>
<feature type="active site" description="Charge relay system" evidence="2">
    <location>
        <position position="137"/>
    </location>
</feature>
<feature type="active site" description="Charge relay system" evidence="2">
    <location>
        <position position="168"/>
    </location>
</feature>
<feature type="active site" description="Charge relay system" evidence="2">
    <location>
        <position position="325"/>
    </location>
</feature>
<feature type="binding site" evidence="5">
    <location>
        <position position="107"/>
    </location>
    <ligand>
        <name>Ca(2+)</name>
        <dbReference type="ChEBI" id="CHEBI:29108"/>
        <label>1</label>
    </ligand>
</feature>
<feature type="binding site" evidence="5">
    <location>
        <position position="146"/>
    </location>
    <ligand>
        <name>Ca(2+)</name>
        <dbReference type="ChEBI" id="CHEBI:29108"/>
        <label>1</label>
    </ligand>
</feature>
<feature type="binding site" evidence="5">
    <location>
        <position position="179"/>
    </location>
    <ligand>
        <name>Ca(2+)</name>
        <dbReference type="ChEBI" id="CHEBI:29108"/>
        <label>1</label>
    </ligand>
</feature>
<feature type="binding site" evidence="5">
    <location>
        <position position="181"/>
    </location>
    <ligand>
        <name>Ca(2+)</name>
        <dbReference type="ChEBI" id="CHEBI:29108"/>
        <label>1</label>
    </ligand>
</feature>
<feature type="binding site" evidence="5">
    <location>
        <position position="183"/>
    </location>
    <ligand>
        <name>Ca(2+)</name>
        <dbReference type="ChEBI" id="CHEBI:29108"/>
        <label>1</label>
    </ligand>
</feature>
<feature type="binding site" evidence="5">
    <location>
        <position position="185"/>
    </location>
    <ligand>
        <name>Ca(2+)</name>
        <dbReference type="ChEBI" id="CHEBI:29108"/>
        <label>1</label>
    </ligand>
</feature>
<feature type="binding site" evidence="5">
    <location>
        <position position="273"/>
    </location>
    <ligand>
        <name>Ca(2+)</name>
        <dbReference type="ChEBI" id="CHEBI:29108"/>
        <label>2</label>
    </ligand>
</feature>
<feature type="binding site" evidence="5">
    <location>
        <position position="275"/>
    </location>
    <ligand>
        <name>Ca(2+)</name>
        <dbReference type="ChEBI" id="CHEBI:29108"/>
        <label>2</label>
    </ligand>
</feature>
<feature type="binding site" evidence="5">
    <location>
        <position position="278"/>
    </location>
    <ligand>
        <name>Ca(2+)</name>
        <dbReference type="ChEBI" id="CHEBI:29108"/>
        <label>2</label>
    </ligand>
</feature>
<feature type="sequence conflict" description="In Ref. 1; CAB56500." evidence="9" ref="1">
    <original>S</original>
    <variation>T</variation>
    <location>
        <position position="207"/>
    </location>
</feature>
<feature type="sequence conflict" description="In Ref. 1; CAB56500." evidence="9" ref="1">
    <original>A</original>
    <variation>P</variation>
    <location>
        <position position="233"/>
    </location>
</feature>
<feature type="sequence conflict" description="In Ref. 1; CAB56500 and 3; AA sequence." evidence="9" ref="1 3">
    <original>K</original>
    <variation>R</variation>
    <location>
        <position position="249"/>
    </location>
</feature>
<feature type="sequence conflict" description="In Ref. 3; AA sequence." evidence="9" ref="3">
    <original>SSGN</original>
    <variation>NSGS</variation>
    <location>
        <begin position="262"/>
        <end position="265"/>
    </location>
</feature>
<feature type="sequence conflict" description="In Ref. 1; CAB56500." evidence="9" ref="1">
    <original>N</original>
    <variation>S</variation>
    <location>
        <position position="316"/>
    </location>
</feature>
<feature type="helix" evidence="16">
    <location>
        <begin position="112"/>
        <end position="115"/>
    </location>
</feature>
<feature type="helix" evidence="16">
    <location>
        <begin position="118"/>
        <end position="123"/>
    </location>
</feature>
<feature type="strand" evidence="16">
    <location>
        <begin position="132"/>
        <end position="138"/>
    </location>
</feature>
<feature type="strand" evidence="16">
    <location>
        <begin position="149"/>
        <end position="154"/>
    </location>
</feature>
<feature type="strand" evidence="17">
    <location>
        <begin position="156"/>
        <end position="158"/>
    </location>
</feature>
<feature type="strand" evidence="17">
    <location>
        <begin position="161"/>
        <end position="163"/>
    </location>
</feature>
<feature type="strand" evidence="16">
    <location>
        <begin position="165"/>
        <end position="167"/>
    </location>
</feature>
<feature type="helix" evidence="16">
    <location>
        <begin position="168"/>
        <end position="177"/>
    </location>
</feature>
<feature type="strand" evidence="16">
    <location>
        <begin position="180"/>
        <end position="184"/>
    </location>
</feature>
<feature type="strand" evidence="16">
    <location>
        <begin position="192"/>
        <end position="198"/>
    </location>
</feature>
<feature type="strand" evidence="16">
    <location>
        <begin position="204"/>
        <end position="206"/>
    </location>
</feature>
<feature type="helix" evidence="16">
    <location>
        <begin position="208"/>
        <end position="220"/>
    </location>
</feature>
<feature type="strand" evidence="16">
    <location>
        <begin position="224"/>
        <end position="228"/>
    </location>
</feature>
<feature type="strand" evidence="16">
    <location>
        <begin position="230"/>
        <end position="234"/>
    </location>
</feature>
<feature type="helix" evidence="16">
    <location>
        <begin position="237"/>
        <end position="248"/>
    </location>
</feature>
<feature type="strand" evidence="16">
    <location>
        <begin position="252"/>
        <end position="256"/>
    </location>
</feature>
<feature type="turn" evidence="16">
    <location>
        <begin position="272"/>
        <end position="274"/>
    </location>
</feature>
<feature type="strand" evidence="16">
    <location>
        <begin position="278"/>
        <end position="284"/>
    </location>
</feature>
<feature type="strand" evidence="16">
    <location>
        <begin position="300"/>
        <end position="305"/>
    </location>
</feature>
<feature type="strand" evidence="16">
    <location>
        <begin position="307"/>
        <end position="313"/>
    </location>
</feature>
<feature type="turn" evidence="16">
    <location>
        <begin position="314"/>
        <end position="316"/>
    </location>
</feature>
<feature type="strand" evidence="16">
    <location>
        <begin position="317"/>
        <end position="321"/>
    </location>
</feature>
<feature type="helix" evidence="16">
    <location>
        <begin position="324"/>
        <end position="341"/>
    </location>
</feature>
<feature type="helix" evidence="16">
    <location>
        <begin position="347"/>
        <end position="356"/>
    </location>
</feature>
<feature type="helix" evidence="16">
    <location>
        <begin position="364"/>
        <end position="367"/>
    </location>
</feature>
<feature type="helix" evidence="16">
    <location>
        <begin position="374"/>
        <end position="377"/>
    </location>
</feature>
<accession>P00780</accession>
<accession>Q9F943</accession>
<name>SUBC_BACLI</name>
<dbReference type="EC" id="3.4.21.62" evidence="3 7"/>
<dbReference type="EMBL" id="X03341">
    <property type="protein sequence ID" value="CAB56500.1"/>
    <property type="molecule type" value="Genomic_DNA"/>
</dbReference>
<dbReference type="EMBL" id="AF205189">
    <property type="protein sequence ID" value="AAG31026.1"/>
    <property type="molecule type" value="Genomic_DNA"/>
</dbReference>
<dbReference type="PIR" id="A24111">
    <property type="entry name" value="SUBSCL"/>
</dbReference>
<dbReference type="PDB" id="1AF4">
    <property type="method" value="X-ray"/>
    <property type="resolution" value="2.60 A"/>
    <property type="chains" value="A=106-379"/>
</dbReference>
<dbReference type="PDB" id="1AV7">
    <property type="method" value="X-ray"/>
    <property type="resolution" value="2.60 A"/>
    <property type="chains" value="A=106-379"/>
</dbReference>
<dbReference type="PDB" id="1AVT">
    <property type="method" value="X-ray"/>
    <property type="resolution" value="2.00 A"/>
    <property type="chains" value="A=106-379"/>
</dbReference>
<dbReference type="PDB" id="1BE6">
    <property type="method" value="X-ray"/>
    <property type="resolution" value="2.15 A"/>
    <property type="chains" value="A=106-379"/>
</dbReference>
<dbReference type="PDB" id="1BE8">
    <property type="method" value="X-ray"/>
    <property type="resolution" value="2.20 A"/>
    <property type="chains" value="A=106-379"/>
</dbReference>
<dbReference type="PDB" id="1BFK">
    <property type="method" value="X-ray"/>
    <property type="resolution" value="2.30 A"/>
    <property type="chains" value="A=106-379"/>
</dbReference>
<dbReference type="PDB" id="1BFU">
    <property type="method" value="X-ray"/>
    <property type="resolution" value="2.20 A"/>
    <property type="chains" value="A=106-379"/>
</dbReference>
<dbReference type="PDB" id="1C3L">
    <property type="method" value="X-ray"/>
    <property type="resolution" value="2.16 A"/>
    <property type="chains" value="A=106-378"/>
</dbReference>
<dbReference type="PDB" id="1CSE">
    <property type="method" value="X-ray"/>
    <property type="resolution" value="1.20 A"/>
    <property type="chains" value="E=106-379"/>
</dbReference>
<dbReference type="PDB" id="1OYV">
    <property type="method" value="X-ray"/>
    <property type="resolution" value="2.50 A"/>
    <property type="chains" value="A/B=106-379"/>
</dbReference>
<dbReference type="PDB" id="1R0R">
    <property type="method" value="X-ray"/>
    <property type="resolution" value="1.10 A"/>
    <property type="chains" value="E=106-378"/>
</dbReference>
<dbReference type="PDB" id="1SBC">
    <property type="method" value="X-ray"/>
    <property type="resolution" value="2.50 A"/>
    <property type="chains" value="A=106-379"/>
</dbReference>
<dbReference type="PDB" id="1SCA">
    <property type="method" value="X-ray"/>
    <property type="resolution" value="2.00 A"/>
    <property type="chains" value="A=106-379"/>
</dbReference>
<dbReference type="PDB" id="1SCB">
    <property type="method" value="X-ray"/>
    <property type="resolution" value="2.30 A"/>
    <property type="chains" value="A=106-379"/>
</dbReference>
<dbReference type="PDB" id="1SCD">
    <property type="method" value="X-ray"/>
    <property type="resolution" value="2.30 A"/>
    <property type="chains" value="A=106-379"/>
</dbReference>
<dbReference type="PDB" id="1SCN">
    <property type="method" value="X-ray"/>
    <property type="resolution" value="1.90 A"/>
    <property type="chains" value="E=106-379"/>
</dbReference>
<dbReference type="PDB" id="1SEL">
    <property type="method" value="X-ray"/>
    <property type="resolution" value="2.00 A"/>
    <property type="chains" value="A/B=106-379"/>
</dbReference>
<dbReference type="PDB" id="1VSB">
    <property type="method" value="X-ray"/>
    <property type="resolution" value="2.10 A"/>
    <property type="chains" value="A=106-379"/>
</dbReference>
<dbReference type="PDB" id="1YU6">
    <property type="method" value="X-ray"/>
    <property type="resolution" value="1.55 A"/>
    <property type="chains" value="A/B=106-379"/>
</dbReference>
<dbReference type="PDB" id="2SEC">
    <property type="method" value="X-ray"/>
    <property type="resolution" value="1.80 A"/>
    <property type="chains" value="E=106-379"/>
</dbReference>
<dbReference type="PDB" id="2WUV">
    <property type="method" value="X-ray"/>
    <property type="resolution" value="2.24 A"/>
    <property type="chains" value="A=106-379"/>
</dbReference>
<dbReference type="PDB" id="2WUW">
    <property type="method" value="X-ray"/>
    <property type="resolution" value="2.23 A"/>
    <property type="chains" value="E=106-379"/>
</dbReference>
<dbReference type="PDB" id="3UNX">
    <property type="method" value="X-ray"/>
    <property type="resolution" value="1.26 A"/>
    <property type="chains" value="A=106-379"/>
</dbReference>
<dbReference type="PDB" id="3VSB">
    <property type="method" value="X-ray"/>
    <property type="resolution" value="2.60 A"/>
    <property type="chains" value="A=106-379"/>
</dbReference>
<dbReference type="PDB" id="4C3U">
    <property type="method" value="X-ray"/>
    <property type="resolution" value="2.29 A"/>
    <property type="chains" value="A=106-379"/>
</dbReference>
<dbReference type="PDB" id="4C3V">
    <property type="method" value="X-ray"/>
    <property type="resolution" value="2.26 A"/>
    <property type="chains" value="A=106-379"/>
</dbReference>
<dbReference type="PDB" id="6DWQ">
    <property type="method" value="X-ray"/>
    <property type="resolution" value="1.27 A"/>
    <property type="chains" value="A=106-379"/>
</dbReference>
<dbReference type="PDBsum" id="1AF4"/>
<dbReference type="PDBsum" id="1AV7"/>
<dbReference type="PDBsum" id="1AVT"/>
<dbReference type="PDBsum" id="1BE6"/>
<dbReference type="PDBsum" id="1BE8"/>
<dbReference type="PDBsum" id="1BFK"/>
<dbReference type="PDBsum" id="1BFU"/>
<dbReference type="PDBsum" id="1C3L"/>
<dbReference type="PDBsum" id="1CSE"/>
<dbReference type="PDBsum" id="1OYV"/>
<dbReference type="PDBsum" id="1R0R"/>
<dbReference type="PDBsum" id="1SBC"/>
<dbReference type="PDBsum" id="1SCA"/>
<dbReference type="PDBsum" id="1SCB"/>
<dbReference type="PDBsum" id="1SCD"/>
<dbReference type="PDBsum" id="1SCN"/>
<dbReference type="PDBsum" id="1SEL"/>
<dbReference type="PDBsum" id="1VSB"/>
<dbReference type="PDBsum" id="1YU6"/>
<dbReference type="PDBsum" id="2SEC"/>
<dbReference type="PDBsum" id="2WUV"/>
<dbReference type="PDBsum" id="2WUW"/>
<dbReference type="PDBsum" id="3UNX"/>
<dbReference type="PDBsum" id="3VSB"/>
<dbReference type="PDBsum" id="4C3U"/>
<dbReference type="PDBsum" id="4C3V"/>
<dbReference type="PDBsum" id="6DWQ"/>
<dbReference type="PCDDB" id="P00780"/>
<dbReference type="SMR" id="P00780"/>
<dbReference type="IntAct" id="P00780">
    <property type="interactions" value="2"/>
</dbReference>
<dbReference type="MINT" id="P00780"/>
<dbReference type="BindingDB" id="P00780"/>
<dbReference type="ChEMBL" id="CHEMBL4299"/>
<dbReference type="DrugBank" id="DB03316">
    <property type="generic name" value="1,4-Dioxane"/>
</dbReference>
<dbReference type="DrugBank" id="DB03607">
    <property type="generic name" value="[(1R)-1-acetamido-2-(4-chlorophenyl)ethyl]-[(2S)-2-amino-3-hydroxy-3-oxo-propoxy]-dihydroxy-boron"/>
</dbReference>
<dbReference type="DrugBank" id="DB02560">
    <property type="generic name" value="[(1S)-1-acetamido-2-(4-chlorophenyl)ethyl]-[(2S)-2-amino-3-hydroxy-3-oxo-propoxy]-dihydroxy-boron"/>
</dbReference>
<dbReference type="DrugBank" id="DB02677">
    <property type="generic name" value="D-naphthyl-1-acetamido boronic acid alanine"/>
</dbReference>
<dbReference type="DrugBank" id="DB01942">
    <property type="generic name" value="Formic acid"/>
</dbReference>
<dbReference type="DrugBank" id="DB03290">
    <property type="generic name" value="L-naphthyl-1-acetamido boronic acid alanine"/>
</dbReference>
<dbReference type="Allergome" id="8254">
    <property type="allergen name" value="Bac li Subtilisin"/>
</dbReference>
<dbReference type="MEROPS" id="I09.001"/>
<dbReference type="MEROPS" id="S08.001"/>
<dbReference type="MetOSite" id="P00780"/>
<dbReference type="BRENDA" id="3.4.21.62">
    <property type="organism ID" value="669"/>
</dbReference>
<dbReference type="SABIO-RK" id="P00780"/>
<dbReference type="EvolutionaryTrace" id="P00780"/>
<dbReference type="GO" id="GO:0005615">
    <property type="term" value="C:extracellular space"/>
    <property type="evidence" value="ECO:0007669"/>
    <property type="project" value="TreeGrafter"/>
</dbReference>
<dbReference type="GO" id="GO:0046872">
    <property type="term" value="F:metal ion binding"/>
    <property type="evidence" value="ECO:0007669"/>
    <property type="project" value="UniProtKB-KW"/>
</dbReference>
<dbReference type="GO" id="GO:0004252">
    <property type="term" value="F:serine-type endopeptidase activity"/>
    <property type="evidence" value="ECO:0007669"/>
    <property type="project" value="UniProtKB-EC"/>
</dbReference>
<dbReference type="GO" id="GO:0006508">
    <property type="term" value="P:proteolysis"/>
    <property type="evidence" value="ECO:0007669"/>
    <property type="project" value="UniProtKB-KW"/>
</dbReference>
<dbReference type="CDD" id="cd07477">
    <property type="entry name" value="Peptidases_S8_Subtilisin_subset"/>
    <property type="match status" value="1"/>
</dbReference>
<dbReference type="Gene3D" id="3.30.70.80">
    <property type="entry name" value="Peptidase S8 propeptide/proteinase inhibitor I9"/>
    <property type="match status" value="1"/>
</dbReference>
<dbReference type="Gene3D" id="3.40.50.200">
    <property type="entry name" value="Peptidase S8/S53 domain"/>
    <property type="match status" value="1"/>
</dbReference>
<dbReference type="InterPro" id="IPR000209">
    <property type="entry name" value="Peptidase_S8/S53_dom"/>
</dbReference>
<dbReference type="InterPro" id="IPR036852">
    <property type="entry name" value="Peptidase_S8/S53_dom_sf"/>
</dbReference>
<dbReference type="InterPro" id="IPR023827">
    <property type="entry name" value="Peptidase_S8_Asp-AS"/>
</dbReference>
<dbReference type="InterPro" id="IPR022398">
    <property type="entry name" value="Peptidase_S8_His-AS"/>
</dbReference>
<dbReference type="InterPro" id="IPR023828">
    <property type="entry name" value="Peptidase_S8_Ser-AS"/>
</dbReference>
<dbReference type="InterPro" id="IPR050131">
    <property type="entry name" value="Peptidase_S8_subtilisin-like"/>
</dbReference>
<dbReference type="InterPro" id="IPR015500">
    <property type="entry name" value="Peptidase_S8_subtilisin-rel"/>
</dbReference>
<dbReference type="InterPro" id="IPR010259">
    <property type="entry name" value="S8pro/Inhibitor_I9"/>
</dbReference>
<dbReference type="InterPro" id="IPR037045">
    <property type="entry name" value="S8pro/Inhibitor_I9_sf"/>
</dbReference>
<dbReference type="InterPro" id="IPR034202">
    <property type="entry name" value="Subtilisin_Carlsberg-like"/>
</dbReference>
<dbReference type="PANTHER" id="PTHR43806:SF11">
    <property type="entry name" value="CEREVISIN-RELATED"/>
    <property type="match status" value="1"/>
</dbReference>
<dbReference type="PANTHER" id="PTHR43806">
    <property type="entry name" value="PEPTIDASE S8"/>
    <property type="match status" value="1"/>
</dbReference>
<dbReference type="Pfam" id="PF05922">
    <property type="entry name" value="Inhibitor_I9"/>
    <property type="match status" value="1"/>
</dbReference>
<dbReference type="Pfam" id="PF00082">
    <property type="entry name" value="Peptidase_S8"/>
    <property type="match status" value="1"/>
</dbReference>
<dbReference type="PRINTS" id="PR00723">
    <property type="entry name" value="SUBTILISIN"/>
</dbReference>
<dbReference type="SUPFAM" id="SSF54897">
    <property type="entry name" value="Protease propeptides/inhibitors"/>
    <property type="match status" value="1"/>
</dbReference>
<dbReference type="SUPFAM" id="SSF52743">
    <property type="entry name" value="Subtilisin-like"/>
    <property type="match status" value="1"/>
</dbReference>
<dbReference type="PROSITE" id="PS51892">
    <property type="entry name" value="SUBTILASE"/>
    <property type="match status" value="1"/>
</dbReference>
<dbReference type="PROSITE" id="PS00136">
    <property type="entry name" value="SUBTILASE_ASP"/>
    <property type="match status" value="1"/>
</dbReference>
<dbReference type="PROSITE" id="PS00137">
    <property type="entry name" value="SUBTILASE_HIS"/>
    <property type="match status" value="1"/>
</dbReference>
<dbReference type="PROSITE" id="PS00138">
    <property type="entry name" value="SUBTILASE_SER"/>
    <property type="match status" value="1"/>
</dbReference>
<comment type="function">
    <text evidence="3 7">Subtilisin is an extracellular alkaline serine protease, it catalyzes the hydrolysis of proteins and peptide amides (PubMed:11109488, Ref.4). Shows high specificity for aromatic and hydrophobic amino acids in the P1 substrate position (PubMed:11109488). May play an important role in the degradation of feather keratin (PubMed:11109488).</text>
</comment>
<comment type="catalytic activity">
    <reaction evidence="3 7">
        <text>Hydrolysis of proteins with broad specificity for peptide bonds, and a preference for a large uncharged residue in P1. Hydrolyzes peptide amides.</text>
        <dbReference type="EC" id="3.4.21.62"/>
    </reaction>
</comment>
<comment type="cofactor">
    <cofactor evidence="5">
        <name>Ca(2+)</name>
        <dbReference type="ChEBI" id="CHEBI:29108"/>
    </cofactor>
    <text evidence="5">Binds 2 calcium ions per subunit.</text>
</comment>
<comment type="activity regulation">
    <text evidence="6">Inhibited by p-chlorophenyl and 1-naphthyl boronic acid derivatives.</text>
</comment>
<comment type="biophysicochemical properties">
    <kinetics>
        <KM evidence="7">1.2 mM for Suc-Ala(2)-Ala-pNA</KM>
        <KM evidence="7">0.79 mM for Suc-Ala(2)-Phe-pNA</KM>
        <KM evidence="3">0.851 mM for Suc-Ala(2)-Phe-pNA</KM>
        <KM evidence="7">0.22 mM for MeO-Suc-Ala(2)-Phe-pNA</KM>
        <KM evidence="3">5.6 mM for Suc-Gly(2)-Phe-pNA</KM>
        <KM evidence="3">0.334 mM for Suc-Ala(2)-Pro-Phe-pNA</KM>
        <KM evidence="3">0.062 mM for Suc-Ala(2)-Pro-Leu-pNA</KM>
        <KM evidence="3">0.422 mM for Suc-Ala(2)-Pro-Arg-pNA</KM>
        <KM evidence="3">0.245 mM for Suc-Ala(2)-Pro-Glu-pNA</KM>
        <KM evidence="3">0.042 mM for Suc-Ala-Glu-Pro-Phe-pNA</KM>
        <text evidence="3 7">kcat is 1.6 sec(-1) with Suc-Ala(2)-Ala-pNA as substrate. kcat is 57 sec(-1) with Suc-Ala(2)-Phe-pNA as substrate. kcat is 97 sec(-1) with MeO-Suc-Ala(2)-Phe-pNA as substrate (Ref.4). kcat is 0.990 sec(-1) with Suc-Gly(2)-Phe-pNA as substrate. kcat is 20.3 sec(-1) with Suc-Ala(2)-Phe-pNA as substrate. kcat is 646 sec(-1) with Suc-Ala(2)-Pro-Phe-pNA as substrate. kcat is 137 sec(-1) with Suc-Ala(2)-Pro-Leu-pNA as substrate. kcat is 5.31 sec(-1) with Suc-Ala(2)-Pro-Arg-pNA as substrate. kcat is 1.92 sec(-1) with Suc-Ala(2)-Pro-Glu-pNA as substrate. kcat is 375 sec(-1) with Suc-Ala-Glu-Pro-Phe-pNA as substrate (PubMed:11109488).</text>
    </kinetics>
</comment>
<comment type="subcellular location">
    <subcellularLocation>
        <location evidence="3">Secreted</location>
    </subcellularLocation>
</comment>
<comment type="biotechnology">
    <text>Used as a detergent protease. Sold under the name Alcalase by Novozymes.</text>
</comment>
<comment type="similarity">
    <text evidence="2">Belongs to the peptidase S8 family.</text>
</comment>
<evidence type="ECO:0000255" key="1"/>
<evidence type="ECO:0000255" key="2">
    <source>
        <dbReference type="PROSITE-ProRule" id="PRU01240"/>
    </source>
</evidence>
<evidence type="ECO:0000269" key="3">
    <source>
    </source>
</evidence>
<evidence type="ECO:0000269" key="4">
    <source>
    </source>
</evidence>
<evidence type="ECO:0000269" key="5">
    <source>
    </source>
</evidence>
<evidence type="ECO:0000269" key="6">
    <source>
    </source>
</evidence>
<evidence type="ECO:0000269" key="7">
    <source ref="4"/>
</evidence>
<evidence type="ECO:0000303" key="8">
    <source>
    </source>
</evidence>
<evidence type="ECO:0000305" key="9"/>
<evidence type="ECO:0000312" key="10">
    <source>
        <dbReference type="EMBL" id="CAB56500.1"/>
    </source>
</evidence>
<evidence type="ECO:0007744" key="11">
    <source>
        <dbReference type="PDB" id="1AV7"/>
    </source>
</evidence>
<evidence type="ECO:0007744" key="12">
    <source>
        <dbReference type="PDB" id="1AVT"/>
    </source>
</evidence>
<evidence type="ECO:0007744" key="13">
    <source>
        <dbReference type="PDB" id="1SEL"/>
    </source>
</evidence>
<evidence type="ECO:0007744" key="14">
    <source>
        <dbReference type="PDB" id="1VSB"/>
    </source>
</evidence>
<evidence type="ECO:0007744" key="15">
    <source>
        <dbReference type="PDB" id="3VSB"/>
    </source>
</evidence>
<evidence type="ECO:0007829" key="16">
    <source>
        <dbReference type="PDB" id="1R0R"/>
    </source>
</evidence>
<evidence type="ECO:0007829" key="17">
    <source>
        <dbReference type="PDB" id="1SBC"/>
    </source>
</evidence>
<protein>
    <recommendedName>
        <fullName evidence="8">Subtilisin Carlsberg</fullName>
        <ecNumber evidence="3 7">3.4.21.62</ecNumber>
    </recommendedName>
</protein>
<organism>
    <name type="scientific">Bacillus licheniformis</name>
    <dbReference type="NCBI Taxonomy" id="1402"/>
    <lineage>
        <taxon>Bacteria</taxon>
        <taxon>Bacillati</taxon>
        <taxon>Bacillota</taxon>
        <taxon>Bacilli</taxon>
        <taxon>Bacillales</taxon>
        <taxon>Bacillaceae</taxon>
        <taxon>Bacillus</taxon>
    </lineage>
</organism>
<keyword id="KW-0002">3D-structure</keyword>
<keyword id="KW-0106">Calcium</keyword>
<keyword id="KW-0903">Direct protein sequencing</keyword>
<keyword id="KW-0378">Hydrolase</keyword>
<keyword id="KW-0479">Metal-binding</keyword>
<keyword id="KW-0645">Protease</keyword>
<keyword id="KW-0964">Secreted</keyword>
<keyword id="KW-0720">Serine protease</keyword>
<keyword id="KW-0732">Signal</keyword>
<keyword id="KW-0865">Zymogen</keyword>
<sequence>MMRKKSFWLGMLTAFMLVFTMAFSDSASAAQPAKNVEKDYIVGFKSGVKTASVKKDIIKESGGKVDKQFRIINAAKAKLDKEALKEVKNDPDVAYVEEDHVAHALAQTVPYGIPLIKADKVQAQGFKGANVKVAVLDTGIQASHPDLNVVGGASFVAGEAYNTDGNGHGTHVAGTVAALDNTTGVLGVAPSVSLYAVKVLNSSGSGSYSGIVSGIEWATTNGMDVINMSLGGASGSTAMKQAVDNAYAKGVVVVAAAGNSGSSGNTNTIGYPAKYDSVIAVGAVDSNSNRASFSSVGAELEVMAPGAGVYSTYPTNTYATLNGTSMASPHVAGAAALILSKHPNLSASQVRNRLSSTATYLGSSFYYGKGLINVEAAAQ</sequence>